<reference key="1">
    <citation type="journal article" date="2005" name="Science">
        <title>The transcriptional landscape of the mammalian genome.</title>
        <authorList>
            <person name="Carninci P."/>
            <person name="Kasukawa T."/>
            <person name="Katayama S."/>
            <person name="Gough J."/>
            <person name="Frith M.C."/>
            <person name="Maeda N."/>
            <person name="Oyama R."/>
            <person name="Ravasi T."/>
            <person name="Lenhard B."/>
            <person name="Wells C."/>
            <person name="Kodzius R."/>
            <person name="Shimokawa K."/>
            <person name="Bajic V.B."/>
            <person name="Brenner S.E."/>
            <person name="Batalov S."/>
            <person name="Forrest A.R."/>
            <person name="Zavolan M."/>
            <person name="Davis M.J."/>
            <person name="Wilming L.G."/>
            <person name="Aidinis V."/>
            <person name="Allen J.E."/>
            <person name="Ambesi-Impiombato A."/>
            <person name="Apweiler R."/>
            <person name="Aturaliya R.N."/>
            <person name="Bailey T.L."/>
            <person name="Bansal M."/>
            <person name="Baxter L."/>
            <person name="Beisel K.W."/>
            <person name="Bersano T."/>
            <person name="Bono H."/>
            <person name="Chalk A.M."/>
            <person name="Chiu K.P."/>
            <person name="Choudhary V."/>
            <person name="Christoffels A."/>
            <person name="Clutterbuck D.R."/>
            <person name="Crowe M.L."/>
            <person name="Dalla E."/>
            <person name="Dalrymple B.P."/>
            <person name="de Bono B."/>
            <person name="Della Gatta G."/>
            <person name="di Bernardo D."/>
            <person name="Down T."/>
            <person name="Engstrom P."/>
            <person name="Fagiolini M."/>
            <person name="Faulkner G."/>
            <person name="Fletcher C.F."/>
            <person name="Fukushima T."/>
            <person name="Furuno M."/>
            <person name="Futaki S."/>
            <person name="Gariboldi M."/>
            <person name="Georgii-Hemming P."/>
            <person name="Gingeras T.R."/>
            <person name="Gojobori T."/>
            <person name="Green R.E."/>
            <person name="Gustincich S."/>
            <person name="Harbers M."/>
            <person name="Hayashi Y."/>
            <person name="Hensch T.K."/>
            <person name="Hirokawa N."/>
            <person name="Hill D."/>
            <person name="Huminiecki L."/>
            <person name="Iacono M."/>
            <person name="Ikeo K."/>
            <person name="Iwama A."/>
            <person name="Ishikawa T."/>
            <person name="Jakt M."/>
            <person name="Kanapin A."/>
            <person name="Katoh M."/>
            <person name="Kawasawa Y."/>
            <person name="Kelso J."/>
            <person name="Kitamura H."/>
            <person name="Kitano H."/>
            <person name="Kollias G."/>
            <person name="Krishnan S.P."/>
            <person name="Kruger A."/>
            <person name="Kummerfeld S.K."/>
            <person name="Kurochkin I.V."/>
            <person name="Lareau L.F."/>
            <person name="Lazarevic D."/>
            <person name="Lipovich L."/>
            <person name="Liu J."/>
            <person name="Liuni S."/>
            <person name="McWilliam S."/>
            <person name="Madan Babu M."/>
            <person name="Madera M."/>
            <person name="Marchionni L."/>
            <person name="Matsuda H."/>
            <person name="Matsuzawa S."/>
            <person name="Miki H."/>
            <person name="Mignone F."/>
            <person name="Miyake S."/>
            <person name="Morris K."/>
            <person name="Mottagui-Tabar S."/>
            <person name="Mulder N."/>
            <person name="Nakano N."/>
            <person name="Nakauchi H."/>
            <person name="Ng P."/>
            <person name="Nilsson R."/>
            <person name="Nishiguchi S."/>
            <person name="Nishikawa S."/>
            <person name="Nori F."/>
            <person name="Ohara O."/>
            <person name="Okazaki Y."/>
            <person name="Orlando V."/>
            <person name="Pang K.C."/>
            <person name="Pavan W.J."/>
            <person name="Pavesi G."/>
            <person name="Pesole G."/>
            <person name="Petrovsky N."/>
            <person name="Piazza S."/>
            <person name="Reed J."/>
            <person name="Reid J.F."/>
            <person name="Ring B.Z."/>
            <person name="Ringwald M."/>
            <person name="Rost B."/>
            <person name="Ruan Y."/>
            <person name="Salzberg S.L."/>
            <person name="Sandelin A."/>
            <person name="Schneider C."/>
            <person name="Schoenbach C."/>
            <person name="Sekiguchi K."/>
            <person name="Semple C.A."/>
            <person name="Seno S."/>
            <person name="Sessa L."/>
            <person name="Sheng Y."/>
            <person name="Shibata Y."/>
            <person name="Shimada H."/>
            <person name="Shimada K."/>
            <person name="Silva D."/>
            <person name="Sinclair B."/>
            <person name="Sperling S."/>
            <person name="Stupka E."/>
            <person name="Sugiura K."/>
            <person name="Sultana R."/>
            <person name="Takenaka Y."/>
            <person name="Taki K."/>
            <person name="Tammoja K."/>
            <person name="Tan S.L."/>
            <person name="Tang S."/>
            <person name="Taylor M.S."/>
            <person name="Tegner J."/>
            <person name="Teichmann S.A."/>
            <person name="Ueda H.R."/>
            <person name="van Nimwegen E."/>
            <person name="Verardo R."/>
            <person name="Wei C.L."/>
            <person name="Yagi K."/>
            <person name="Yamanishi H."/>
            <person name="Zabarovsky E."/>
            <person name="Zhu S."/>
            <person name="Zimmer A."/>
            <person name="Hide W."/>
            <person name="Bult C."/>
            <person name="Grimmond S.M."/>
            <person name="Teasdale R.D."/>
            <person name="Liu E.T."/>
            <person name="Brusic V."/>
            <person name="Quackenbush J."/>
            <person name="Wahlestedt C."/>
            <person name="Mattick J.S."/>
            <person name="Hume D.A."/>
            <person name="Kai C."/>
            <person name="Sasaki D."/>
            <person name="Tomaru Y."/>
            <person name="Fukuda S."/>
            <person name="Kanamori-Katayama M."/>
            <person name="Suzuki M."/>
            <person name="Aoki J."/>
            <person name="Arakawa T."/>
            <person name="Iida J."/>
            <person name="Imamura K."/>
            <person name="Itoh M."/>
            <person name="Kato T."/>
            <person name="Kawaji H."/>
            <person name="Kawagashira N."/>
            <person name="Kawashima T."/>
            <person name="Kojima M."/>
            <person name="Kondo S."/>
            <person name="Konno H."/>
            <person name="Nakano K."/>
            <person name="Ninomiya N."/>
            <person name="Nishio T."/>
            <person name="Okada M."/>
            <person name="Plessy C."/>
            <person name="Shibata K."/>
            <person name="Shiraki T."/>
            <person name="Suzuki S."/>
            <person name="Tagami M."/>
            <person name="Waki K."/>
            <person name="Watahiki A."/>
            <person name="Okamura-Oho Y."/>
            <person name="Suzuki H."/>
            <person name="Kawai J."/>
            <person name="Hayashizaki Y."/>
        </authorList>
    </citation>
    <scope>NUCLEOTIDE SEQUENCE [LARGE SCALE MRNA] (ISOFORM 1)</scope>
    <source>
        <strain>C57BL/6J</strain>
        <tissue>Kidney</tissue>
        <tissue>Placenta</tissue>
    </source>
</reference>
<reference key="2">
    <citation type="journal article" date="2004" name="Genome Res.">
        <title>The status, quality, and expansion of the NIH full-length cDNA project: the Mammalian Gene Collection (MGC).</title>
        <authorList>
            <consortium name="The MGC Project Team"/>
        </authorList>
    </citation>
    <scope>NUCLEOTIDE SEQUENCE [LARGE SCALE MRNA] (ISOFORM 1)</scope>
    <source>
        <tissue>Limb</tissue>
    </source>
</reference>
<reference key="3">
    <citation type="journal article" date="2006" name="J. Biol. Chem.">
        <title>Apop-1, a novel protein inducing cyclophilin D-dependent but Bax/Bak-related channel-independent apoptosis.</title>
        <authorList>
            <person name="Yasuda O."/>
            <person name="Fukuo K."/>
            <person name="Sun X."/>
            <person name="Nishitani M."/>
            <person name="Yotsui T."/>
            <person name="Higuchi M."/>
            <person name="Suzuki T."/>
            <person name="Rakugi H."/>
            <person name="Smithies O."/>
            <person name="Maeda N."/>
            <person name="Ogihara T."/>
        </authorList>
    </citation>
    <scope>FUNCTION</scope>
    <scope>ALTERNATIVE SPLICING (ISOFORMS 1 AND 2)</scope>
    <scope>SUBCELLULAR LOCATION</scope>
    <scope>TISSUE SPECIFICITY</scope>
</reference>
<reference key="4">
    <citation type="journal article" date="2008" name="Biochem. Biophys. Res. Commun.">
        <title>Akt activation prevents Apop-1-induced death of cells.</title>
        <authorList>
            <person name="Sun X."/>
            <person name="Yasuda O."/>
            <person name="Takemura Y."/>
            <person name="Kawamoto H."/>
            <person name="Higuchi M."/>
            <person name="Baba Y."/>
            <person name="Katsuya T."/>
            <person name="Fukuo K."/>
            <person name="Ogihara T."/>
            <person name="Rakugi H."/>
        </authorList>
    </citation>
    <scope>FUNCTION</scope>
    <scope>SUBCELLULAR LOCATION</scope>
</reference>
<reference key="5">
    <citation type="journal article" date="2019" name="EMBO Mol. Med.">
        <title>APOPT1/COA8 assists COX assembly and is oppositely regulated by UPS and ROS.</title>
        <authorList>
            <person name="Signes A."/>
            <person name="Cerutti R."/>
            <person name="Dickson A.S."/>
            <person name="Beninca C."/>
            <person name="Hinchy E.C."/>
            <person name="Ghezzi D."/>
            <person name="Carrozzo R."/>
            <person name="Bertini E."/>
            <person name="Murphy M.P."/>
            <person name="Nathan J.A."/>
            <person name="Viscomi C."/>
            <person name="Fernandez-Vizarra E."/>
            <person name="Zeviani M."/>
        </authorList>
    </citation>
    <scope>FUNCTION</scope>
    <scope>DISRUPTION PHENOTYPE</scope>
    <scope>INDUCTION BY OXIDATIVE STRESS</scope>
</reference>
<proteinExistence type="evidence at protein level"/>
<evidence type="ECO:0000250" key="1">
    <source>
        <dbReference type="UniProtKB" id="Q96IL0"/>
    </source>
</evidence>
<evidence type="ECO:0000255" key="2"/>
<evidence type="ECO:0000269" key="3">
    <source>
    </source>
</evidence>
<evidence type="ECO:0000269" key="4">
    <source>
    </source>
</evidence>
<evidence type="ECO:0000269" key="5">
    <source>
    </source>
</evidence>
<evidence type="ECO:0000305" key="6"/>
<evidence type="ECO:0000305" key="7">
    <source>
    </source>
</evidence>
<evidence type="ECO:0000305" key="8">
    <source>
    </source>
</evidence>
<name>COA8_MOUSE</name>
<feature type="transit peptide" description="Mitochondrion" evidence="2">
    <location>
        <begin position="1"/>
        <end position="26"/>
    </location>
</feature>
<feature type="chain" id="PRO_0000353108" description="Cytochrome c oxidase assembly factor 8">
    <location>
        <begin position="27"/>
        <end position="192"/>
    </location>
</feature>
<feature type="splice variant" id="VSP_041973" description="In isoform 2." evidence="6">
    <original>DWYKRNFAITFFMGKVVLERMWSKLRQKKTSS</original>
    <variation>AGPGSQDVGCVGKCSFAELHPYLTVSALQGSCPA</variation>
    <location>
        <begin position="161"/>
        <end position="192"/>
    </location>
</feature>
<comment type="function">
    <text evidence="5">Required for cytochrome c complex (COX) IV assembly and function Protects COX assembly from oxidation-induced degradation, COX being the terminal component of the mitochondrial respiratory chain.</text>
</comment>
<comment type="subcellular location">
    <subcellularLocation>
        <location evidence="7 8">Mitochondrion inner membrane</location>
        <topology evidence="1">Peripheral membrane protein</topology>
        <orientation evidence="1">Matrix side</orientation>
    </subcellularLocation>
</comment>
<comment type="alternative products">
    <event type="alternative splicing"/>
    <isoform>
        <id>Q9CQW7-1</id>
        <name>1</name>
        <name>Apop-2</name>
        <sequence type="displayed"/>
    </isoform>
    <isoform>
        <id>Q9CQW7-2</id>
        <name>2</name>
        <name>Apop-1</name>
        <sequence type="described" ref="VSP_041973"/>
    </isoform>
</comment>
<comment type="tissue specificity">
    <text evidence="3">Expressed in atherosclerotic smooth muscle cells (at protein level). Expressed in aorta, brain, heart, kidney, liver, lung and spleen. Isoform 1 is strongly expressed in Kidney. Isoform 2 is strongly expressed in brain.</text>
</comment>
<comment type="induction">
    <text evidence="5">In conditions of increased oxidative stress, the protein is stabilized, increasing its mature intramitochondrial form and thereby protecting COX from oxidatively induced degradation.</text>
</comment>
<comment type="PTM">
    <text evidence="1">N-terminal mitochondrial targeting sequence is cleaved from the mature protein once in the mitochondrion.</text>
</comment>
<comment type="PTM">
    <text evidence="1">In normal conditions, the cytoplasmic precursor protein is rapidly degraded by the ubiquitination-proteasome system (UPS). Oxidative stress induces protein stabilization and import into mitochondria where it protects COX from degradation.</text>
</comment>
<comment type="disruption phenotype">
    <text evidence="5">Mutant mice generated by CRISPR-Cas9-mediated gene editing are born at the expected Mendelian rate. They show impaired motor skills, with decreased motor coordination and endurance. Mutant show global COX deficiency with reduced enzymatic activity, low steady-state levels of structural subunits and defective assembly in all the tested tissues.</text>
</comment>
<comment type="similarity">
    <text evidence="6">Belongs to the COA8 family.</text>
</comment>
<comment type="caution">
    <text evidence="3 4 5">First thought to play a role in the regulation of apoptosis, mediating mitochondria-induced cell death in vascular smooth muscle cells through the release of cytochrome c (COX) from mitochondria and the activation of the caspase cascade (PubMed:16782708, PubMed:18977203). However, recent studies show that it is not directly involved in apoptosis regulation but in the protection of COX from oxidatively induced degradation (PubMed:30552096).</text>
</comment>
<gene>
    <name type="primary">Coa8</name>
    <name type="synonym">Apop1</name>
    <name type="synonym">Apopt1</name>
</gene>
<keyword id="KW-0025">Alternative splicing</keyword>
<keyword id="KW-0053">Apoptosis</keyword>
<keyword id="KW-0472">Membrane</keyword>
<keyword id="KW-0496">Mitochondrion</keyword>
<keyword id="KW-0999">Mitochondrion inner membrane</keyword>
<keyword id="KW-1185">Reference proteome</keyword>
<keyword id="KW-0809">Transit peptide</keyword>
<keyword id="KW-0832">Ubl conjugation</keyword>
<dbReference type="EMBL" id="AK002873">
    <property type="protein sequence ID" value="BAB22421.1"/>
    <property type="molecule type" value="mRNA"/>
</dbReference>
<dbReference type="EMBL" id="AK005403">
    <property type="protein sequence ID" value="BAB24003.1"/>
    <property type="molecule type" value="mRNA"/>
</dbReference>
<dbReference type="EMBL" id="AK010493">
    <property type="protein sequence ID" value="BAB26983.1"/>
    <property type="molecule type" value="mRNA"/>
</dbReference>
<dbReference type="EMBL" id="AK012648">
    <property type="protein sequence ID" value="BAB28380.1"/>
    <property type="molecule type" value="mRNA"/>
</dbReference>
<dbReference type="EMBL" id="BC071262">
    <property type="protein sequence ID" value="AAH71262.1"/>
    <property type="molecule type" value="mRNA"/>
</dbReference>
<dbReference type="CCDS" id="CCDS26186.1">
    <molecule id="Q9CQW7-1"/>
</dbReference>
<dbReference type="CCDS" id="CCDS49181.1">
    <molecule id="Q9CQW7-2"/>
</dbReference>
<dbReference type="RefSeq" id="NP_001156860.1">
    <molecule id="Q9CQW7-2"/>
    <property type="nucleotide sequence ID" value="NM_001163388.1"/>
</dbReference>
<dbReference type="RefSeq" id="NP_080787.1">
    <molecule id="Q9CQW7-1"/>
    <property type="nucleotide sequence ID" value="NM_026511.2"/>
</dbReference>
<dbReference type="FunCoup" id="Q9CQW7">
    <property type="interactions" value="1021"/>
</dbReference>
<dbReference type="STRING" id="10090.ENSMUSP00000131169"/>
<dbReference type="iPTMnet" id="Q9CQW7"/>
<dbReference type="PhosphoSitePlus" id="Q9CQW7"/>
<dbReference type="PaxDb" id="10090-ENSMUSP00000038865"/>
<dbReference type="ProteomicsDB" id="296270">
    <molecule id="Q9CQW7-1"/>
</dbReference>
<dbReference type="ProteomicsDB" id="296271">
    <molecule id="Q9CQW7-2"/>
</dbReference>
<dbReference type="Pumba" id="Q9CQW7"/>
<dbReference type="Antibodypedia" id="66570">
    <property type="antibodies" value="35 antibodies from 11 providers"/>
</dbReference>
<dbReference type="DNASU" id="68020"/>
<dbReference type="Ensembl" id="ENSMUST00000040519.12">
    <molecule id="Q9CQW7-1"/>
    <property type="protein sequence ID" value="ENSMUSP00000038865.6"/>
    <property type="gene ID" value="ENSMUSG00000037787.15"/>
</dbReference>
<dbReference type="Ensembl" id="ENSMUST00000163220.10">
    <molecule id="Q9CQW7-2"/>
    <property type="protein sequence ID" value="ENSMUSP00000131169.3"/>
    <property type="gene ID" value="ENSMUSG00000037787.15"/>
</dbReference>
<dbReference type="GeneID" id="68020"/>
<dbReference type="KEGG" id="mmu:68020"/>
<dbReference type="UCSC" id="uc007pdt.2">
    <molecule id="Q9CQW7-1"/>
    <property type="organism name" value="mouse"/>
</dbReference>
<dbReference type="UCSC" id="uc011yuy.1">
    <molecule id="Q9CQW7-2"/>
    <property type="organism name" value="mouse"/>
</dbReference>
<dbReference type="AGR" id="MGI:1915270"/>
<dbReference type="CTD" id="84334"/>
<dbReference type="MGI" id="MGI:1915270">
    <property type="gene designation" value="Coa8"/>
</dbReference>
<dbReference type="VEuPathDB" id="HostDB:ENSMUSG00000037787"/>
<dbReference type="eggNOG" id="KOG4094">
    <property type="taxonomic scope" value="Eukaryota"/>
</dbReference>
<dbReference type="GeneTree" id="ENSGT00390000008212"/>
<dbReference type="HOGENOM" id="CLU_118274_0_0_1"/>
<dbReference type="InParanoid" id="Q9CQW7"/>
<dbReference type="OMA" id="AWNQEFW"/>
<dbReference type="PhylomeDB" id="Q9CQW7"/>
<dbReference type="TreeFam" id="TF315168"/>
<dbReference type="BioGRID-ORCS" id="68020">
    <property type="hits" value="6 hits in 78 CRISPR screens"/>
</dbReference>
<dbReference type="ChiTaRS" id="Apopt1">
    <property type="organism name" value="mouse"/>
</dbReference>
<dbReference type="PRO" id="PR:Q9CQW7"/>
<dbReference type="Proteomes" id="UP000000589">
    <property type="component" value="Chromosome 12"/>
</dbReference>
<dbReference type="RNAct" id="Q9CQW7">
    <property type="molecule type" value="protein"/>
</dbReference>
<dbReference type="Bgee" id="ENSMUSG00000037787">
    <property type="expression patterns" value="Expressed in interventricular septum and 233 other cell types or tissues"/>
</dbReference>
<dbReference type="ExpressionAtlas" id="Q9CQW7">
    <property type="expression patterns" value="baseline and differential"/>
</dbReference>
<dbReference type="GO" id="GO:0099617">
    <property type="term" value="C:matrix side of mitochondrial inner membrane"/>
    <property type="evidence" value="ECO:0000250"/>
    <property type="project" value="UniProtKB"/>
</dbReference>
<dbReference type="GO" id="GO:0005739">
    <property type="term" value="C:mitochondrion"/>
    <property type="evidence" value="ECO:0000314"/>
    <property type="project" value="UniProtKB"/>
</dbReference>
<dbReference type="GO" id="GO:0097193">
    <property type="term" value="P:intrinsic apoptotic signaling pathway"/>
    <property type="evidence" value="ECO:0000314"/>
    <property type="project" value="MGI"/>
</dbReference>
<dbReference type="GO" id="GO:0033617">
    <property type="term" value="P:mitochondrial cytochrome c oxidase assembly"/>
    <property type="evidence" value="ECO:0000314"/>
    <property type="project" value="UniProtKB"/>
</dbReference>
<dbReference type="GO" id="GO:1904960">
    <property type="term" value="P:positive regulation of cytochrome-c oxidase activity"/>
    <property type="evidence" value="ECO:0000314"/>
    <property type="project" value="UniProtKB"/>
</dbReference>
<dbReference type="GO" id="GO:0050821">
    <property type="term" value="P:protein stabilization"/>
    <property type="evidence" value="ECO:0000314"/>
    <property type="project" value="UniProtKB"/>
</dbReference>
<dbReference type="GO" id="GO:0000302">
    <property type="term" value="P:response to reactive oxygen species"/>
    <property type="evidence" value="ECO:0000314"/>
    <property type="project" value="UniProtKB"/>
</dbReference>
<dbReference type="InterPro" id="IPR018796">
    <property type="entry name" value="COA8"/>
</dbReference>
<dbReference type="PANTHER" id="PTHR31107">
    <property type="entry name" value="APOPTOGENIC PROTEIN 1, MITOCHONDRIAL"/>
    <property type="match status" value="1"/>
</dbReference>
<dbReference type="PANTHER" id="PTHR31107:SF2">
    <property type="entry name" value="CYTOCHROME C OXIDASE ASSEMBLY FACTOR 8"/>
    <property type="match status" value="1"/>
</dbReference>
<dbReference type="Pfam" id="PF10231">
    <property type="entry name" value="COA8"/>
    <property type="match status" value="1"/>
</dbReference>
<sequence length="192" mass="22715">MAALRPGSRALRRLLCRSFSGGGGVRLARERPTDHRDAASSRVSRFCPPRQSCHDWIGPPDKCSNLRPVHFHIPENESPLEQRLRELRQETQEWNQQFWAKQNLSFNKEKEEFIYSRLQAKGAGLRTESGQRATLDAEEMADFYKDFLSKNFQKHMRYNRDWYKRNFAITFFMGKVVLERMWSKLRQKKTSS</sequence>
<protein>
    <recommendedName>
        <fullName evidence="6">Cytochrome c oxidase assembly factor 8</fullName>
        <shortName evidence="6">COA8</shortName>
    </recommendedName>
    <alternativeName>
        <fullName>Apoptogenic protein 1, mitochondrial</fullName>
        <shortName>APOP-1</shortName>
    </alternativeName>
</protein>
<organism>
    <name type="scientific">Mus musculus</name>
    <name type="common">Mouse</name>
    <dbReference type="NCBI Taxonomy" id="10090"/>
    <lineage>
        <taxon>Eukaryota</taxon>
        <taxon>Metazoa</taxon>
        <taxon>Chordata</taxon>
        <taxon>Craniata</taxon>
        <taxon>Vertebrata</taxon>
        <taxon>Euteleostomi</taxon>
        <taxon>Mammalia</taxon>
        <taxon>Eutheria</taxon>
        <taxon>Euarchontoglires</taxon>
        <taxon>Glires</taxon>
        <taxon>Rodentia</taxon>
        <taxon>Myomorpha</taxon>
        <taxon>Muroidea</taxon>
        <taxon>Muridae</taxon>
        <taxon>Murinae</taxon>
        <taxon>Mus</taxon>
        <taxon>Mus</taxon>
    </lineage>
</organism>
<accession>Q9CQW7</accession>